<name>PYRF_STRT1</name>
<gene>
    <name evidence="1" type="primary">pyrF</name>
    <name type="ordered locus">str0967</name>
</gene>
<dbReference type="EC" id="4.1.1.23" evidence="1"/>
<dbReference type="EMBL" id="CP000024">
    <property type="protein sequence ID" value="AAV62546.1"/>
    <property type="molecule type" value="Genomic_DNA"/>
</dbReference>
<dbReference type="RefSeq" id="WP_011227188.1">
    <property type="nucleotide sequence ID" value="NC_006449.1"/>
</dbReference>
<dbReference type="SMR" id="Q5LZW9"/>
<dbReference type="KEGG" id="stc:str0967"/>
<dbReference type="HOGENOM" id="CLU_067069_1_1_9"/>
<dbReference type="UniPathway" id="UPA00070">
    <property type="reaction ID" value="UER00120"/>
</dbReference>
<dbReference type="GO" id="GO:0005829">
    <property type="term" value="C:cytosol"/>
    <property type="evidence" value="ECO:0007669"/>
    <property type="project" value="TreeGrafter"/>
</dbReference>
<dbReference type="GO" id="GO:0004590">
    <property type="term" value="F:orotidine-5'-phosphate decarboxylase activity"/>
    <property type="evidence" value="ECO:0007669"/>
    <property type="project" value="UniProtKB-UniRule"/>
</dbReference>
<dbReference type="GO" id="GO:0006207">
    <property type="term" value="P:'de novo' pyrimidine nucleobase biosynthetic process"/>
    <property type="evidence" value="ECO:0007669"/>
    <property type="project" value="InterPro"/>
</dbReference>
<dbReference type="GO" id="GO:0044205">
    <property type="term" value="P:'de novo' UMP biosynthetic process"/>
    <property type="evidence" value="ECO:0007669"/>
    <property type="project" value="UniProtKB-UniRule"/>
</dbReference>
<dbReference type="CDD" id="cd04725">
    <property type="entry name" value="OMP_decarboxylase_like"/>
    <property type="match status" value="1"/>
</dbReference>
<dbReference type="FunFam" id="3.20.20.70:FF:000015">
    <property type="entry name" value="Orotidine 5'-phosphate decarboxylase"/>
    <property type="match status" value="1"/>
</dbReference>
<dbReference type="Gene3D" id="3.20.20.70">
    <property type="entry name" value="Aldolase class I"/>
    <property type="match status" value="1"/>
</dbReference>
<dbReference type="HAMAP" id="MF_01200_B">
    <property type="entry name" value="OMPdecase_type1_B"/>
    <property type="match status" value="1"/>
</dbReference>
<dbReference type="InterPro" id="IPR013785">
    <property type="entry name" value="Aldolase_TIM"/>
</dbReference>
<dbReference type="InterPro" id="IPR014732">
    <property type="entry name" value="OMPdecase"/>
</dbReference>
<dbReference type="InterPro" id="IPR018089">
    <property type="entry name" value="OMPdecase_AS"/>
</dbReference>
<dbReference type="InterPro" id="IPR047596">
    <property type="entry name" value="OMPdecase_bac"/>
</dbReference>
<dbReference type="InterPro" id="IPR001754">
    <property type="entry name" value="OMPdeCOase_dom"/>
</dbReference>
<dbReference type="InterPro" id="IPR011060">
    <property type="entry name" value="RibuloseP-bd_barrel"/>
</dbReference>
<dbReference type="NCBIfam" id="NF001273">
    <property type="entry name" value="PRK00230.1"/>
    <property type="match status" value="1"/>
</dbReference>
<dbReference type="NCBIfam" id="TIGR01740">
    <property type="entry name" value="pyrF"/>
    <property type="match status" value="1"/>
</dbReference>
<dbReference type="PANTHER" id="PTHR32119">
    <property type="entry name" value="OROTIDINE 5'-PHOSPHATE DECARBOXYLASE"/>
    <property type="match status" value="1"/>
</dbReference>
<dbReference type="PANTHER" id="PTHR32119:SF2">
    <property type="entry name" value="OROTIDINE 5'-PHOSPHATE DECARBOXYLASE"/>
    <property type="match status" value="1"/>
</dbReference>
<dbReference type="Pfam" id="PF00215">
    <property type="entry name" value="OMPdecase"/>
    <property type="match status" value="1"/>
</dbReference>
<dbReference type="SMART" id="SM00934">
    <property type="entry name" value="OMPdecase"/>
    <property type="match status" value="1"/>
</dbReference>
<dbReference type="SUPFAM" id="SSF51366">
    <property type="entry name" value="Ribulose-phoshate binding barrel"/>
    <property type="match status" value="1"/>
</dbReference>
<dbReference type="PROSITE" id="PS00156">
    <property type="entry name" value="OMPDECASE"/>
    <property type="match status" value="1"/>
</dbReference>
<proteinExistence type="inferred from homology"/>
<sequence length="231" mass="25275">MRENRPVIALDFPTLEDVKAFLAKFPADEKLYVKIGMELYYAAGPEIVRYVKELGHSVFLDLKLHDIPNTVKSAMRVLSNLGVDMTNVHAAGGVEMMKAAREGLGEGPILIAVTQLTSTSEEQMRDFQNIQTTLQESVVHYAQKTAEAGLNGVVCSAHEVAKIKEATNQDFVCLTPGIRPAGAAVGDQKRVMTPDDAHQIGSDYIVVGRPITQAEDPVAAYHDIKAQWNDQ</sequence>
<protein>
    <recommendedName>
        <fullName evidence="1">Orotidine 5'-phosphate decarboxylase</fullName>
        <ecNumber evidence="1">4.1.1.23</ecNumber>
    </recommendedName>
    <alternativeName>
        <fullName evidence="1">OMP decarboxylase</fullName>
        <shortName evidence="1">OMPDCase</shortName>
        <shortName evidence="1">OMPdecase</shortName>
    </alternativeName>
</protein>
<keyword id="KW-0210">Decarboxylase</keyword>
<keyword id="KW-0456">Lyase</keyword>
<keyword id="KW-0665">Pyrimidine biosynthesis</keyword>
<evidence type="ECO:0000255" key="1">
    <source>
        <dbReference type="HAMAP-Rule" id="MF_01200"/>
    </source>
</evidence>
<organism>
    <name type="scientific">Streptococcus thermophilus (strain CNRZ 1066)</name>
    <dbReference type="NCBI Taxonomy" id="299768"/>
    <lineage>
        <taxon>Bacteria</taxon>
        <taxon>Bacillati</taxon>
        <taxon>Bacillota</taxon>
        <taxon>Bacilli</taxon>
        <taxon>Lactobacillales</taxon>
        <taxon>Streptococcaceae</taxon>
        <taxon>Streptococcus</taxon>
    </lineage>
</organism>
<accession>Q5LZW9</accession>
<reference key="1">
    <citation type="journal article" date="2004" name="Nat. Biotechnol.">
        <title>Complete sequence and comparative genome analysis of the dairy bacterium Streptococcus thermophilus.</title>
        <authorList>
            <person name="Bolotin A."/>
            <person name="Quinquis B."/>
            <person name="Renault P."/>
            <person name="Sorokin A."/>
            <person name="Ehrlich S.D."/>
            <person name="Kulakauskas S."/>
            <person name="Lapidus A."/>
            <person name="Goltsman E."/>
            <person name="Mazur M."/>
            <person name="Pusch G.D."/>
            <person name="Fonstein M."/>
            <person name="Overbeek R."/>
            <person name="Kyprides N."/>
            <person name="Purnelle B."/>
            <person name="Prozzi D."/>
            <person name="Ngui K."/>
            <person name="Masuy D."/>
            <person name="Hancy F."/>
            <person name="Burteau S."/>
            <person name="Boutry M."/>
            <person name="Delcour J."/>
            <person name="Goffeau A."/>
            <person name="Hols P."/>
        </authorList>
    </citation>
    <scope>NUCLEOTIDE SEQUENCE [LARGE SCALE GENOMIC DNA]</scope>
    <source>
        <strain>CNRZ 1066</strain>
    </source>
</reference>
<feature type="chain" id="PRO_0000241915" description="Orotidine 5'-phosphate decarboxylase">
    <location>
        <begin position="1"/>
        <end position="231"/>
    </location>
</feature>
<feature type="active site" description="Proton donor" evidence="1">
    <location>
        <position position="63"/>
    </location>
</feature>
<feature type="binding site" evidence="1">
    <location>
        <position position="11"/>
    </location>
    <ligand>
        <name>substrate</name>
    </ligand>
</feature>
<feature type="binding site" evidence="1">
    <location>
        <position position="34"/>
    </location>
    <ligand>
        <name>substrate</name>
    </ligand>
</feature>
<feature type="binding site" evidence="1">
    <location>
        <begin position="61"/>
        <end position="70"/>
    </location>
    <ligand>
        <name>substrate</name>
    </ligand>
</feature>
<feature type="binding site" evidence="1">
    <location>
        <position position="117"/>
    </location>
    <ligand>
        <name>substrate</name>
    </ligand>
</feature>
<feature type="binding site" evidence="1">
    <location>
        <position position="179"/>
    </location>
    <ligand>
        <name>substrate</name>
    </ligand>
</feature>
<feature type="binding site" evidence="1">
    <location>
        <position position="188"/>
    </location>
    <ligand>
        <name>substrate</name>
    </ligand>
</feature>
<feature type="binding site" evidence="1">
    <location>
        <position position="208"/>
    </location>
    <ligand>
        <name>substrate</name>
    </ligand>
</feature>
<feature type="binding site" evidence="1">
    <location>
        <position position="209"/>
    </location>
    <ligand>
        <name>substrate</name>
    </ligand>
</feature>
<comment type="function">
    <text evidence="1">Catalyzes the decarboxylation of orotidine 5'-monophosphate (OMP) to uridine 5'-monophosphate (UMP).</text>
</comment>
<comment type="catalytic activity">
    <reaction evidence="1">
        <text>orotidine 5'-phosphate + H(+) = UMP + CO2</text>
        <dbReference type="Rhea" id="RHEA:11596"/>
        <dbReference type="ChEBI" id="CHEBI:15378"/>
        <dbReference type="ChEBI" id="CHEBI:16526"/>
        <dbReference type="ChEBI" id="CHEBI:57538"/>
        <dbReference type="ChEBI" id="CHEBI:57865"/>
        <dbReference type="EC" id="4.1.1.23"/>
    </reaction>
</comment>
<comment type="pathway">
    <text evidence="1">Pyrimidine metabolism; UMP biosynthesis via de novo pathway; UMP from orotate: step 2/2.</text>
</comment>
<comment type="subunit">
    <text evidence="1">Homodimer.</text>
</comment>
<comment type="similarity">
    <text evidence="1">Belongs to the OMP decarboxylase family. Type 1 subfamily.</text>
</comment>